<comment type="function">
    <text evidence="1">Involved in host translation shutoff without degradating host RNA. By suppressing host gene expression, facilitates the evasion from host type I interferon immune response.</text>
</comment>
<keyword id="KW-1262">Eukaryotic host gene expression shutoff by virus</keyword>
<keyword id="KW-1190">Host gene expression shutoff by virus</keyword>
<keyword id="KW-0945">Host-virus interaction</keyword>
<keyword id="KW-1090">Inhibition of host innate immune response by virus</keyword>
<keyword id="KW-0922">Interferon antiviral system evasion</keyword>
<keyword id="KW-1185">Reference proteome</keyword>
<keyword id="KW-0899">Viral immunoevasion</keyword>
<organismHost>
    <name type="scientific">Gallus gallus</name>
    <name type="common">Chicken</name>
    <dbReference type="NCBI Taxonomy" id="9031"/>
</organismHost>
<protein>
    <recommendedName>
        <fullName>Host translation inhibitor 5b</fullName>
        <shortName>ns5b</shortName>
    </recommendedName>
    <alternativeName>
        <fullName>Accessory protein 5b</fullName>
    </alternativeName>
</protein>
<feature type="chain" id="PRO_0000289891" description="Host translation inhibitor 5b">
    <location>
        <begin position="1"/>
        <end position="82"/>
    </location>
</feature>
<feature type="sequence variant" description="In strain: Isolate Vero cell-adapted.">
    <original>Q</original>
    <variation>R</variation>
    <location>
        <position position="36"/>
    </location>
</feature>
<feature type="sequence variant" description="In strain: Isolate IBV-EP3, Isolate Vero cell-adapted and Isolate Vero cell-adapted p65.">
    <original>E</original>
    <variation>G</variation>
    <location>
        <position position="72"/>
    </location>
</feature>
<feature type="sequence variant" description="In strain: Isolate Vero cell-adapted.">
    <original>K</original>
    <variation>R</variation>
    <location>
        <position position="73"/>
    </location>
</feature>
<feature type="sequence variant" description="In strain: Isolate Vero cell-adapted and Isolate Vero cell-adapted p65.">
    <original>L</original>
    <variation>S</variation>
    <location>
        <position position="81"/>
    </location>
</feature>
<evidence type="ECO:0000250" key="1">
    <source>
        <dbReference type="UniProtKB" id="Q80RZ3"/>
    </source>
</evidence>
<sequence>MNNSKDNPFRGAIARKARIYLREGLDCVYFLNKAGQAEPCPACTSLVFQGKTCEEHIHNNNLLSWQAVKQLEKQTPQRQSLN</sequence>
<name>NS5B_IBVB</name>
<organism>
    <name type="scientific">Avian infectious bronchitis virus (strain Beaudette)</name>
    <name type="common">IBV</name>
    <dbReference type="NCBI Taxonomy" id="11122"/>
    <lineage>
        <taxon>Viruses</taxon>
        <taxon>Riboviria</taxon>
        <taxon>Orthornavirae</taxon>
        <taxon>Pisuviricota</taxon>
        <taxon>Pisoniviricetes</taxon>
        <taxon>Nidovirales</taxon>
        <taxon>Cornidovirineae</taxon>
        <taxon>Coronaviridae</taxon>
        <taxon>Orthocoronavirinae</taxon>
        <taxon>Gammacoronavirus</taxon>
        <taxon>Igacovirus</taxon>
        <taxon>Avian coronavirus</taxon>
    </lineage>
</organism>
<accession>Q89786</accession>
<accession>Q4ZJS5</accession>
<accession>Q4ZJT6</accession>
<accession>Q5MNY6</accession>
<proteinExistence type="inferred from homology"/>
<dbReference type="EMBL" id="M95169">
    <property type="protein sequence ID" value="AAA70241.1"/>
    <property type="molecule type" value="Genomic_RNA"/>
</dbReference>
<dbReference type="EMBL" id="M25905">
    <property type="protein sequence ID" value="AAA46219.1"/>
    <property type="molecule type" value="Genomic_RNA"/>
</dbReference>
<dbReference type="EMBL" id="AY692454">
    <property type="protein sequence ID" value="AAV98212.1"/>
    <property type="molecule type" value="mRNA"/>
</dbReference>
<dbReference type="EMBL" id="DQ001338">
    <property type="protein sequence ID" value="AAY24429.1"/>
    <property type="molecule type" value="Genomic_RNA"/>
</dbReference>
<dbReference type="EMBL" id="DQ001339">
    <property type="protein sequence ID" value="AAY24439.1"/>
    <property type="molecule type" value="Genomic_RNA"/>
</dbReference>
<dbReference type="KEGG" id="vg:1489744"/>
<dbReference type="Proteomes" id="UP000006717">
    <property type="component" value="Segment"/>
</dbReference>
<dbReference type="Proteomes" id="UP000107149">
    <property type="component" value="Genome"/>
</dbReference>
<dbReference type="Proteomes" id="UP000180341">
    <property type="component" value="Genome"/>
</dbReference>
<dbReference type="Proteomes" id="UP000180342">
    <property type="component" value="Genome"/>
</dbReference>
<dbReference type="GO" id="GO:0039657">
    <property type="term" value="P:symbiont-mediated suppression of host gene expression"/>
    <property type="evidence" value="ECO:0007669"/>
    <property type="project" value="UniProtKB-KW"/>
</dbReference>
<dbReference type="GO" id="GO:0052170">
    <property type="term" value="P:symbiont-mediated suppression of host innate immune response"/>
    <property type="evidence" value="ECO:0007669"/>
    <property type="project" value="UniProtKB-KW"/>
</dbReference>
<dbReference type="InterPro" id="IPR008458">
    <property type="entry name" value="Acc_prot_5b_avian_CoV"/>
</dbReference>
<dbReference type="Pfam" id="PF05528">
    <property type="entry name" value="Acc5b_avian_CoV"/>
    <property type="match status" value="1"/>
</dbReference>
<gene>
    <name type="ORF">5b</name>
</gene>
<reference key="1">
    <citation type="journal article" date="1984" name="Gene">
        <title>Sequencing of coronavirus IBV genomic RNA: a 195-base open reading frame encoded by mRNA B.</title>
        <authorList>
            <person name="Boursnell M.E.G."/>
            <person name="Brown T.D.K."/>
        </authorList>
    </citation>
    <scope>NUCLEOTIDE SEQUENCE [GENOMIC RNA]</scope>
</reference>
<reference key="2">
    <citation type="journal article" date="1987" name="J. Gen. Virol.">
        <title>Completion of the sequence of the genome of the coronavirus avian infectious bronchitis virus.</title>
        <authorList>
            <person name="Boursnell M.E.G."/>
            <person name="Brown T.D.K."/>
            <person name="Foulds I.J."/>
            <person name="Green P.F."/>
            <person name="Tomley F.M."/>
            <person name="Binns M.M."/>
        </authorList>
    </citation>
    <scope>NUCLEOTIDE SEQUENCE [GENOMIC RNA]</scope>
</reference>
<reference key="3">
    <citation type="journal article" date="1984" name="Adv. Exp. Med. Biol.">
        <title>DNA sequencing studies of genomic cDNA clones of avian infectious bronchitis virus.</title>
        <authorList>
            <person name="Boursnell M.E.G."/>
            <person name="Brown T.D.K."/>
        </authorList>
    </citation>
    <scope>NUCLEOTIDE SEQUENCE [GENOMIC RNA]</scope>
</reference>
<reference key="4">
    <citation type="journal article" date="2005" name="Virology">
        <title>In vitro assembled, recombinant infectious bronchitis viruses demonstrate that the 5a open reading frame is not essential for replication.</title>
        <authorList>
            <person name="Youn S."/>
            <person name="Leibowitz J.L."/>
            <person name="Collisson E.W."/>
        </authorList>
    </citation>
    <scope>NUCLEOTIDE SEQUENCE [MRNA]</scope>
    <source>
        <strain>Isolate Vero cell-adapted</strain>
    </source>
</reference>
<reference key="5">
    <citation type="journal article" date="2005" name="Biochem. Biophys. Res. Commun.">
        <title>Selection of and recombination between minor variants lead to the adaptation of an avian coronavirus to primate cells.</title>
        <authorList>
            <person name="Fang S.G."/>
            <person name="Shen S."/>
            <person name="Tay F.P."/>
            <person name="Liu D.X."/>
        </authorList>
    </citation>
    <scope>NUCLEOTIDE SEQUENCE [GENOMIC RNA]</scope>
    <source>
        <strain>Isolate IBV-EP3</strain>
        <strain>Isolate Vero cell-adapted p65</strain>
    </source>
</reference>